<protein>
    <recommendedName>
        <fullName evidence="1">Acetate kinase</fullName>
        <ecNumber evidence="1">2.7.2.1</ecNumber>
    </recommendedName>
    <alternativeName>
        <fullName evidence="1">Acetokinase</fullName>
    </alternativeName>
</protein>
<name>ACKA_PASMU</name>
<accession>P57866</accession>
<reference key="1">
    <citation type="journal article" date="2001" name="Proc. Natl. Acad. Sci. U.S.A.">
        <title>Complete genomic sequence of Pasteurella multocida Pm70.</title>
        <authorList>
            <person name="May B.J."/>
            <person name="Zhang Q."/>
            <person name="Li L.L."/>
            <person name="Paustian M.L."/>
            <person name="Whittam T.S."/>
            <person name="Kapur V."/>
        </authorList>
    </citation>
    <scope>NUCLEOTIDE SEQUENCE [LARGE SCALE GENOMIC DNA]</scope>
    <source>
        <strain>Pm70</strain>
    </source>
</reference>
<organism>
    <name type="scientific">Pasteurella multocida (strain Pm70)</name>
    <dbReference type="NCBI Taxonomy" id="272843"/>
    <lineage>
        <taxon>Bacteria</taxon>
        <taxon>Pseudomonadati</taxon>
        <taxon>Pseudomonadota</taxon>
        <taxon>Gammaproteobacteria</taxon>
        <taxon>Pasteurellales</taxon>
        <taxon>Pasteurellaceae</taxon>
        <taxon>Pasteurella</taxon>
    </lineage>
</organism>
<feature type="chain" id="PRO_0000107597" description="Acetate kinase">
    <location>
        <begin position="1"/>
        <end position="401"/>
    </location>
</feature>
<feature type="active site" description="Proton donor/acceptor" evidence="1">
    <location>
        <position position="150"/>
    </location>
</feature>
<feature type="binding site" evidence="1">
    <location>
        <position position="10"/>
    </location>
    <ligand>
        <name>Mg(2+)</name>
        <dbReference type="ChEBI" id="CHEBI:18420"/>
    </ligand>
</feature>
<feature type="binding site" evidence="1">
    <location>
        <position position="17"/>
    </location>
    <ligand>
        <name>ATP</name>
        <dbReference type="ChEBI" id="CHEBI:30616"/>
    </ligand>
</feature>
<feature type="binding site" evidence="1">
    <location>
        <position position="91"/>
    </location>
    <ligand>
        <name>substrate</name>
    </ligand>
</feature>
<feature type="binding site" evidence="1">
    <location>
        <begin position="210"/>
        <end position="214"/>
    </location>
    <ligand>
        <name>ATP</name>
        <dbReference type="ChEBI" id="CHEBI:30616"/>
    </ligand>
</feature>
<feature type="binding site" evidence="1">
    <location>
        <begin position="285"/>
        <end position="287"/>
    </location>
    <ligand>
        <name>ATP</name>
        <dbReference type="ChEBI" id="CHEBI:30616"/>
    </ligand>
</feature>
<feature type="binding site" evidence="1">
    <location>
        <begin position="333"/>
        <end position="337"/>
    </location>
    <ligand>
        <name>ATP</name>
        <dbReference type="ChEBI" id="CHEBI:30616"/>
    </ligand>
</feature>
<feature type="binding site" evidence="1">
    <location>
        <position position="387"/>
    </location>
    <ligand>
        <name>Mg(2+)</name>
        <dbReference type="ChEBI" id="CHEBI:18420"/>
    </ligand>
</feature>
<feature type="site" description="Transition state stabilizer" evidence="1">
    <location>
        <position position="182"/>
    </location>
</feature>
<feature type="site" description="Transition state stabilizer" evidence="1">
    <location>
        <position position="243"/>
    </location>
</feature>
<keyword id="KW-0067">ATP-binding</keyword>
<keyword id="KW-0963">Cytoplasm</keyword>
<keyword id="KW-0418">Kinase</keyword>
<keyword id="KW-0460">Magnesium</keyword>
<keyword id="KW-0479">Metal-binding</keyword>
<keyword id="KW-0547">Nucleotide-binding</keyword>
<keyword id="KW-1185">Reference proteome</keyword>
<keyword id="KW-0808">Transferase</keyword>
<proteinExistence type="inferred from homology"/>
<gene>
    <name evidence="1" type="primary">ackA</name>
    <name type="ordered locus">PM0704</name>
</gene>
<dbReference type="EC" id="2.7.2.1" evidence="1"/>
<dbReference type="EMBL" id="AE004439">
    <property type="protein sequence ID" value="AAK02788.1"/>
    <property type="molecule type" value="Genomic_DNA"/>
</dbReference>
<dbReference type="RefSeq" id="WP_010906804.1">
    <property type="nucleotide sequence ID" value="NC_002663.1"/>
</dbReference>
<dbReference type="SMR" id="P57866"/>
<dbReference type="STRING" id="272843.PM0704"/>
<dbReference type="EnsemblBacteria" id="AAK02788">
    <property type="protein sequence ID" value="AAK02788"/>
    <property type="gene ID" value="PM0704"/>
</dbReference>
<dbReference type="KEGG" id="pmu:PM0704"/>
<dbReference type="PATRIC" id="fig|272843.6.peg.712"/>
<dbReference type="HOGENOM" id="CLU_020352_0_1_6"/>
<dbReference type="OrthoDB" id="9802453at2"/>
<dbReference type="UniPathway" id="UPA00340">
    <property type="reaction ID" value="UER00458"/>
</dbReference>
<dbReference type="Proteomes" id="UP000000809">
    <property type="component" value="Chromosome"/>
</dbReference>
<dbReference type="GO" id="GO:0005829">
    <property type="term" value="C:cytosol"/>
    <property type="evidence" value="ECO:0007669"/>
    <property type="project" value="TreeGrafter"/>
</dbReference>
<dbReference type="GO" id="GO:0008776">
    <property type="term" value="F:acetate kinase activity"/>
    <property type="evidence" value="ECO:0007669"/>
    <property type="project" value="UniProtKB-UniRule"/>
</dbReference>
<dbReference type="GO" id="GO:0005524">
    <property type="term" value="F:ATP binding"/>
    <property type="evidence" value="ECO:0007669"/>
    <property type="project" value="UniProtKB-KW"/>
</dbReference>
<dbReference type="GO" id="GO:0000287">
    <property type="term" value="F:magnesium ion binding"/>
    <property type="evidence" value="ECO:0007669"/>
    <property type="project" value="UniProtKB-UniRule"/>
</dbReference>
<dbReference type="GO" id="GO:0006083">
    <property type="term" value="P:acetate metabolic process"/>
    <property type="evidence" value="ECO:0007669"/>
    <property type="project" value="TreeGrafter"/>
</dbReference>
<dbReference type="GO" id="GO:0006085">
    <property type="term" value="P:acetyl-CoA biosynthetic process"/>
    <property type="evidence" value="ECO:0007669"/>
    <property type="project" value="UniProtKB-UniRule"/>
</dbReference>
<dbReference type="CDD" id="cd24010">
    <property type="entry name" value="ASKHA_NBD_AcK_PK"/>
    <property type="match status" value="1"/>
</dbReference>
<dbReference type="FunFam" id="3.30.420.40:FF:000041">
    <property type="entry name" value="Acetate kinase"/>
    <property type="match status" value="1"/>
</dbReference>
<dbReference type="FunFam" id="3.30.420.40:FF:000042">
    <property type="entry name" value="Acetate kinase"/>
    <property type="match status" value="1"/>
</dbReference>
<dbReference type="Gene3D" id="3.30.420.40">
    <property type="match status" value="2"/>
</dbReference>
<dbReference type="HAMAP" id="MF_00020">
    <property type="entry name" value="Acetate_kinase"/>
    <property type="match status" value="1"/>
</dbReference>
<dbReference type="InterPro" id="IPR004372">
    <property type="entry name" value="Ac/propionate_kinase"/>
</dbReference>
<dbReference type="InterPro" id="IPR000890">
    <property type="entry name" value="Aliphatic_acid_kin_short-chain"/>
</dbReference>
<dbReference type="InterPro" id="IPR023865">
    <property type="entry name" value="Aliphatic_acid_kinase_CS"/>
</dbReference>
<dbReference type="InterPro" id="IPR043129">
    <property type="entry name" value="ATPase_NBD"/>
</dbReference>
<dbReference type="NCBIfam" id="TIGR00016">
    <property type="entry name" value="ackA"/>
    <property type="match status" value="1"/>
</dbReference>
<dbReference type="PANTHER" id="PTHR21060">
    <property type="entry name" value="ACETATE KINASE"/>
    <property type="match status" value="1"/>
</dbReference>
<dbReference type="PANTHER" id="PTHR21060:SF21">
    <property type="entry name" value="ACETATE KINASE"/>
    <property type="match status" value="1"/>
</dbReference>
<dbReference type="Pfam" id="PF00871">
    <property type="entry name" value="Acetate_kinase"/>
    <property type="match status" value="1"/>
</dbReference>
<dbReference type="PIRSF" id="PIRSF000722">
    <property type="entry name" value="Acetate_prop_kin"/>
    <property type="match status" value="1"/>
</dbReference>
<dbReference type="PRINTS" id="PR00471">
    <property type="entry name" value="ACETATEKNASE"/>
</dbReference>
<dbReference type="SUPFAM" id="SSF53067">
    <property type="entry name" value="Actin-like ATPase domain"/>
    <property type="match status" value="2"/>
</dbReference>
<dbReference type="PROSITE" id="PS01075">
    <property type="entry name" value="ACETATE_KINASE_1"/>
    <property type="match status" value="1"/>
</dbReference>
<dbReference type="PROSITE" id="PS01076">
    <property type="entry name" value="ACETATE_KINASE_2"/>
    <property type="match status" value="1"/>
</dbReference>
<sequence>MSQKLVLILNCGSSSLKFSILDPQTGEEKLSGLAEAFHLDDARIKWKLHGEKGNADLGAGAAHSEALNFIVNSIFPLDPSLKEDIVAIGHRIVHGGEKFTSSVVITDEVVQGIKDAVQFAPLHNPAHLIGIEEAFKMFPHLKDKNVAVFDTAFHQTMPEEAYLYALPYSLYREHGVRRYGAHGTSHFFVSQQAAERLNVPAEQVNVITCHLGNGASIAAVRHGQCIDTSMGLTPLEGLVMGTRSGDIDPAIVFYLHDNLGLSVEEINTLLTKKSGLLGLTEVTSDCRYAEDNYDKEASAKRALDVFSYRLAKYIGSYMAVIGERLDAIVFTGGIGENSSLVRELTLNHLKLFGYQVDSDKNKAARFGHEGVITADNTPVAMVIPTNEELVIAQDTARLCIA</sequence>
<comment type="function">
    <text evidence="1">Catalyzes the formation of acetyl phosphate from acetate and ATP. Can also catalyze the reverse reaction.</text>
</comment>
<comment type="catalytic activity">
    <reaction evidence="1">
        <text>acetate + ATP = acetyl phosphate + ADP</text>
        <dbReference type="Rhea" id="RHEA:11352"/>
        <dbReference type="ChEBI" id="CHEBI:22191"/>
        <dbReference type="ChEBI" id="CHEBI:30089"/>
        <dbReference type="ChEBI" id="CHEBI:30616"/>
        <dbReference type="ChEBI" id="CHEBI:456216"/>
        <dbReference type="EC" id="2.7.2.1"/>
    </reaction>
</comment>
<comment type="cofactor">
    <cofactor evidence="1">
        <name>Mg(2+)</name>
        <dbReference type="ChEBI" id="CHEBI:18420"/>
    </cofactor>
    <cofactor evidence="1">
        <name>Mn(2+)</name>
        <dbReference type="ChEBI" id="CHEBI:29035"/>
    </cofactor>
    <text evidence="1">Mg(2+). Can also accept Mn(2+).</text>
</comment>
<comment type="pathway">
    <text evidence="1">Metabolic intermediate biosynthesis; acetyl-CoA biosynthesis; acetyl-CoA from acetate: step 1/2.</text>
</comment>
<comment type="subunit">
    <text evidence="1">Homodimer.</text>
</comment>
<comment type="subcellular location">
    <subcellularLocation>
        <location evidence="1">Cytoplasm</location>
    </subcellularLocation>
</comment>
<comment type="similarity">
    <text evidence="1">Belongs to the acetokinase family.</text>
</comment>
<evidence type="ECO:0000255" key="1">
    <source>
        <dbReference type="HAMAP-Rule" id="MF_00020"/>
    </source>
</evidence>